<protein>
    <recommendedName>
        <fullName evidence="1">Chaperone protein HtpG</fullName>
    </recommendedName>
    <alternativeName>
        <fullName evidence="1">Heat shock protein HtpG</fullName>
    </alternativeName>
    <alternativeName>
        <fullName evidence="1">High temperature protein G</fullName>
    </alternativeName>
</protein>
<organism>
    <name type="scientific">Borreliella burgdorferi (strain ATCC 35210 / DSM 4680 / CIP 102532 / B31)</name>
    <name type="common">Borrelia burgdorferi</name>
    <dbReference type="NCBI Taxonomy" id="224326"/>
    <lineage>
        <taxon>Bacteria</taxon>
        <taxon>Pseudomonadati</taxon>
        <taxon>Spirochaetota</taxon>
        <taxon>Spirochaetia</taxon>
        <taxon>Spirochaetales</taxon>
        <taxon>Borreliaceae</taxon>
        <taxon>Borreliella</taxon>
    </lineage>
</organism>
<comment type="function">
    <text evidence="1">Molecular chaperone. Has ATPase activity.</text>
</comment>
<comment type="subunit">
    <text evidence="1">Homodimer.</text>
</comment>
<comment type="subcellular location">
    <subcellularLocation>
        <location evidence="1">Cytoplasm</location>
    </subcellularLocation>
</comment>
<comment type="similarity">
    <text evidence="1">Belongs to the heat shock protein 90 family.</text>
</comment>
<proteinExistence type="evidence at protein level"/>
<sequence>MKKQFDTEVNDLLYLIIHSLYSHKEIFLRELISNASDAIDKLKFLSLTNEKFKNIALEPKIEISFDDKSILIKDNGIGMDEQDLTNHLGVIAKSGTKEFINNLKQDEKKSASLIGQFGVGFYSAFIVSEKVEVTSKKALESDAYIWSSDGKTGYEIEKAKKEESGTEIKLYLNKEGLEYANKWKIQEIIKKYSNHINYPIYIKYSEPIMKDGKQEGIEEKEEKLNETTALWTKNKSEIKAEEYNEFYKNTTFDYENPLMHIHTKAEGNLEYTNLFYVPSKAPYDLYYPNTKPGVKLFINRIFITDSEGSLLPNYLRFIKGIIDCQDLPLNVSREILQQNKILSKIKSSSVKKILSELEKLSKKNPEKFSEFSKEFGRCIKEGVYSDFENREKLISLIRFKSSSVDGFVSFKEYKERMNESQKSIYYITGGKENILKENPIVAAYKEKGFEILIMDDELDEAILNLIPEYEGLKLKAINKNETSNELKDENFKKIEEEFKDTLTKVKEILKDHIKEVNLSATLIKEPSAIIIDSNDPTYQMQKIMLSMGQEVKEIKPILELNPNNKIVQNLKNLEPEKLEKISILLFEEAMLTSGMPSKNPGKFINIINEFIEKDFL</sequence>
<gene>
    <name evidence="1" type="primary">htpG</name>
    <name type="ordered locus">BB_0560</name>
</gene>
<evidence type="ECO:0000255" key="1">
    <source>
        <dbReference type="HAMAP-Rule" id="MF_00505"/>
    </source>
</evidence>
<evidence type="ECO:0007829" key="2">
    <source>
        <dbReference type="PDB" id="7U4C"/>
    </source>
</evidence>
<keyword id="KW-0002">3D-structure</keyword>
<keyword id="KW-0067">ATP-binding</keyword>
<keyword id="KW-0143">Chaperone</keyword>
<keyword id="KW-0963">Cytoplasm</keyword>
<keyword id="KW-0547">Nucleotide-binding</keyword>
<keyword id="KW-1185">Reference proteome</keyword>
<keyword id="KW-0346">Stress response</keyword>
<name>HTPG_BORBU</name>
<feature type="chain" id="PRO_0000062971" description="Chaperone protein HtpG">
    <location>
        <begin position="1"/>
        <end position="616"/>
    </location>
</feature>
<feature type="region of interest" description="A; substrate-binding" evidence="1">
    <location>
        <begin position="1"/>
        <end position="333"/>
    </location>
</feature>
<feature type="region of interest" description="B" evidence="1">
    <location>
        <begin position="334"/>
        <end position="542"/>
    </location>
</feature>
<feature type="region of interest" description="C" evidence="1">
    <location>
        <begin position="543"/>
        <end position="616"/>
    </location>
</feature>
<feature type="strand" evidence="2">
    <location>
        <begin position="1"/>
        <end position="3"/>
    </location>
</feature>
<feature type="helix" evidence="2">
    <location>
        <begin position="8"/>
        <end position="20"/>
    </location>
</feature>
<feature type="helix" evidence="2">
    <location>
        <begin position="24"/>
        <end position="26"/>
    </location>
</feature>
<feature type="helix" evidence="2">
    <location>
        <begin position="29"/>
        <end position="48"/>
    </location>
</feature>
<feature type="helix" evidence="2">
    <location>
        <begin position="50"/>
        <end position="52"/>
    </location>
</feature>
<feature type="strand" evidence="2">
    <location>
        <begin position="61"/>
        <end position="65"/>
    </location>
</feature>
<feature type="strand" evidence="2">
    <location>
        <begin position="67"/>
        <end position="74"/>
    </location>
</feature>
<feature type="helix" evidence="2">
    <location>
        <begin position="81"/>
        <end position="87"/>
    </location>
</feature>
<feature type="helix" evidence="2">
    <location>
        <begin position="97"/>
        <end position="105"/>
    </location>
</feature>
<feature type="helix" evidence="2">
    <location>
        <begin position="107"/>
        <end position="117"/>
    </location>
</feature>
<feature type="helix" evidence="2">
    <location>
        <begin position="120"/>
        <end position="126"/>
    </location>
</feature>
<feature type="strand" evidence="2">
    <location>
        <begin position="127"/>
        <end position="136"/>
    </location>
</feature>
<feature type="strand" evidence="2">
    <location>
        <begin position="143"/>
        <end position="148"/>
    </location>
</feature>
<feature type="strand" evidence="2">
    <location>
        <begin position="150"/>
        <end position="152"/>
    </location>
</feature>
<feature type="strand" evidence="2">
    <location>
        <begin position="154"/>
        <end position="159"/>
    </location>
</feature>
<feature type="strand" evidence="2">
    <location>
        <begin position="163"/>
        <end position="172"/>
    </location>
</feature>
<feature type="turn" evidence="2">
    <location>
        <begin position="174"/>
        <end position="176"/>
    </location>
</feature>
<feature type="helix" evidence="2">
    <location>
        <begin position="177"/>
        <end position="179"/>
    </location>
</feature>
<feature type="helix" evidence="2">
    <location>
        <begin position="182"/>
        <end position="192"/>
    </location>
</feature>
<feature type="strand" evidence="2">
    <location>
        <begin position="200"/>
        <end position="207"/>
    </location>
</feature>
<dbReference type="EMBL" id="U51878">
    <property type="protein sequence ID" value="AAA97469.1"/>
    <property type="molecule type" value="Genomic_DNA"/>
</dbReference>
<dbReference type="EMBL" id="AE000783">
    <property type="protein sequence ID" value="AAC66919.2"/>
    <property type="molecule type" value="Genomic_DNA"/>
</dbReference>
<dbReference type="EMBL" id="L32145">
    <property type="protein sequence ID" value="AAC41403.1"/>
    <property type="molecule type" value="Genomic_DNA"/>
</dbReference>
<dbReference type="PIR" id="G70169">
    <property type="entry name" value="G70169"/>
</dbReference>
<dbReference type="RefSeq" id="NP_212694.2">
    <property type="nucleotide sequence ID" value="NC_001318.1"/>
</dbReference>
<dbReference type="RefSeq" id="WP_002557148.1">
    <property type="nucleotide sequence ID" value="NC_001318.1"/>
</dbReference>
<dbReference type="PDB" id="7U4C">
    <property type="method" value="X-ray"/>
    <property type="resolution" value="2.28 A"/>
    <property type="chains" value="A/B=1-226"/>
</dbReference>
<dbReference type="PDBsum" id="7U4C"/>
<dbReference type="SMR" id="P42555"/>
<dbReference type="STRING" id="224326.BB_0560"/>
<dbReference type="PaxDb" id="224326-BB_0560"/>
<dbReference type="EnsemblBacteria" id="AAC66919">
    <property type="protein sequence ID" value="AAC66919"/>
    <property type="gene ID" value="BB_0560"/>
</dbReference>
<dbReference type="GeneID" id="56567992"/>
<dbReference type="KEGG" id="bbu:BB_0560"/>
<dbReference type="PATRIC" id="fig|224326.49.peg.951"/>
<dbReference type="HOGENOM" id="CLU_006684_3_0_12"/>
<dbReference type="OrthoDB" id="9802640at2"/>
<dbReference type="Proteomes" id="UP000001807">
    <property type="component" value="Chromosome"/>
</dbReference>
<dbReference type="GO" id="GO:0005829">
    <property type="term" value="C:cytosol"/>
    <property type="evidence" value="ECO:0000314"/>
    <property type="project" value="CAFA"/>
</dbReference>
<dbReference type="GO" id="GO:0016020">
    <property type="term" value="C:membrane"/>
    <property type="evidence" value="ECO:0000314"/>
    <property type="project" value="CAFA"/>
</dbReference>
<dbReference type="GO" id="GO:0005524">
    <property type="term" value="F:ATP binding"/>
    <property type="evidence" value="ECO:0007669"/>
    <property type="project" value="UniProtKB-UniRule"/>
</dbReference>
<dbReference type="GO" id="GO:0016887">
    <property type="term" value="F:ATP hydrolysis activity"/>
    <property type="evidence" value="ECO:0007669"/>
    <property type="project" value="InterPro"/>
</dbReference>
<dbReference type="GO" id="GO:0140662">
    <property type="term" value="F:ATP-dependent protein folding chaperone"/>
    <property type="evidence" value="ECO:0007669"/>
    <property type="project" value="InterPro"/>
</dbReference>
<dbReference type="GO" id="GO:0051082">
    <property type="term" value="F:unfolded protein binding"/>
    <property type="evidence" value="ECO:0007669"/>
    <property type="project" value="UniProtKB-UniRule"/>
</dbReference>
<dbReference type="CDD" id="cd16927">
    <property type="entry name" value="HATPase_Hsp90-like"/>
    <property type="match status" value="1"/>
</dbReference>
<dbReference type="FunFam" id="3.30.230.80:FF:000002">
    <property type="entry name" value="Molecular chaperone HtpG"/>
    <property type="match status" value="1"/>
</dbReference>
<dbReference type="FunFam" id="3.30.565.10:FF:000009">
    <property type="entry name" value="Molecular chaperone HtpG"/>
    <property type="match status" value="1"/>
</dbReference>
<dbReference type="Gene3D" id="3.30.230.80">
    <property type="match status" value="1"/>
</dbReference>
<dbReference type="Gene3D" id="3.40.50.11260">
    <property type="match status" value="1"/>
</dbReference>
<dbReference type="Gene3D" id="1.20.120.790">
    <property type="entry name" value="Heat shock protein 90, C-terminal domain"/>
    <property type="match status" value="1"/>
</dbReference>
<dbReference type="Gene3D" id="3.30.565.10">
    <property type="entry name" value="Histidine kinase-like ATPase, C-terminal domain"/>
    <property type="match status" value="1"/>
</dbReference>
<dbReference type="HAMAP" id="MF_00505">
    <property type="entry name" value="HSP90"/>
    <property type="match status" value="1"/>
</dbReference>
<dbReference type="InterPro" id="IPR036890">
    <property type="entry name" value="HATPase_C_sf"/>
</dbReference>
<dbReference type="InterPro" id="IPR019805">
    <property type="entry name" value="Heat_shock_protein_90_CS"/>
</dbReference>
<dbReference type="InterPro" id="IPR037196">
    <property type="entry name" value="HSP90_C"/>
</dbReference>
<dbReference type="InterPro" id="IPR001404">
    <property type="entry name" value="Hsp90_fam"/>
</dbReference>
<dbReference type="InterPro" id="IPR020575">
    <property type="entry name" value="Hsp90_N"/>
</dbReference>
<dbReference type="InterPro" id="IPR020568">
    <property type="entry name" value="Ribosomal_Su5_D2-typ_SF"/>
</dbReference>
<dbReference type="NCBIfam" id="NF003555">
    <property type="entry name" value="PRK05218.1"/>
    <property type="match status" value="1"/>
</dbReference>
<dbReference type="PANTHER" id="PTHR11528">
    <property type="entry name" value="HEAT SHOCK PROTEIN 90 FAMILY MEMBER"/>
    <property type="match status" value="1"/>
</dbReference>
<dbReference type="Pfam" id="PF13589">
    <property type="entry name" value="HATPase_c_3"/>
    <property type="match status" value="1"/>
</dbReference>
<dbReference type="Pfam" id="PF00183">
    <property type="entry name" value="HSP90"/>
    <property type="match status" value="1"/>
</dbReference>
<dbReference type="PIRSF" id="PIRSF002583">
    <property type="entry name" value="Hsp90"/>
    <property type="match status" value="1"/>
</dbReference>
<dbReference type="PRINTS" id="PR00775">
    <property type="entry name" value="HEATSHOCK90"/>
</dbReference>
<dbReference type="SMART" id="SM00387">
    <property type="entry name" value="HATPase_c"/>
    <property type="match status" value="1"/>
</dbReference>
<dbReference type="SUPFAM" id="SSF55874">
    <property type="entry name" value="ATPase domain of HSP90 chaperone/DNA topoisomerase II/histidine kinase"/>
    <property type="match status" value="1"/>
</dbReference>
<dbReference type="SUPFAM" id="SSF110942">
    <property type="entry name" value="HSP90 C-terminal domain"/>
    <property type="match status" value="1"/>
</dbReference>
<dbReference type="SUPFAM" id="SSF54211">
    <property type="entry name" value="Ribosomal protein S5 domain 2-like"/>
    <property type="match status" value="1"/>
</dbReference>
<dbReference type="PROSITE" id="PS00298">
    <property type="entry name" value="HSP90"/>
    <property type="match status" value="1"/>
</dbReference>
<reference key="1">
    <citation type="submission" date="1996-03" db="EMBL/GenBank/DDBJ databases">
        <authorList>
            <person name="Porcella S.F."/>
            <person name="Radolf J.D."/>
            <person name="Norgard M.V."/>
        </authorList>
    </citation>
    <scope>NUCLEOTIDE SEQUENCE [GENOMIC DNA]</scope>
    <source>
        <strain>ATCC 53899 / 297</strain>
    </source>
</reference>
<reference key="2">
    <citation type="journal article" date="1997" name="Nature">
        <title>Genomic sequence of a Lyme disease spirochaete, Borrelia burgdorferi.</title>
        <authorList>
            <person name="Fraser C.M."/>
            <person name="Casjens S."/>
            <person name="Huang W.M."/>
            <person name="Sutton G.G."/>
            <person name="Clayton R.A."/>
            <person name="Lathigra R."/>
            <person name="White O."/>
            <person name="Ketchum K.A."/>
            <person name="Dodson R.J."/>
            <person name="Hickey E.K."/>
            <person name="Gwinn M.L."/>
            <person name="Dougherty B.A."/>
            <person name="Tomb J.-F."/>
            <person name="Fleischmann R.D."/>
            <person name="Richardson D.L."/>
            <person name="Peterson J.D."/>
            <person name="Kerlavage A.R."/>
            <person name="Quackenbush J."/>
            <person name="Salzberg S.L."/>
            <person name="Hanson M."/>
            <person name="van Vugt R."/>
            <person name="Palmer N."/>
            <person name="Adams M.D."/>
            <person name="Gocayne J.D."/>
            <person name="Weidman J.F."/>
            <person name="Utterback T.R."/>
            <person name="Watthey L."/>
            <person name="McDonald L.A."/>
            <person name="Artiach P."/>
            <person name="Bowman C."/>
            <person name="Garland S.A."/>
            <person name="Fujii C."/>
            <person name="Cotton M.D."/>
            <person name="Horst K."/>
            <person name="Roberts K.M."/>
            <person name="Hatch B."/>
            <person name="Smith H.O."/>
            <person name="Venter J.C."/>
        </authorList>
    </citation>
    <scope>NUCLEOTIDE SEQUENCE [LARGE SCALE GENOMIC DNA]</scope>
    <source>
        <strain>ATCC 35210 / DSM 4680 / CIP 102532 / B31</strain>
    </source>
</reference>
<reference key="3">
    <citation type="journal article" date="1994" name="Microbiology">
        <title>Conservation of gene arrangement and an unusual organization of rRNA genes in the linear chromosomes of the Lyme disease spirochaetes Borrelia burgdorferi, B. garinii and B. afzelii.</title>
        <authorList>
            <person name="Ojaimi C."/>
            <person name="Davidson B.E."/>
            <person name="Saint-Girons I."/>
            <person name="Old I.G."/>
        </authorList>
    </citation>
    <scope>NUCLEOTIDE SEQUENCE [GENOMIC DNA] OF 497-574</scope>
    <source>
        <strain>212</strain>
    </source>
</reference>
<accession>P42555</accession>